<name>MTNB_PECAS</name>
<protein>
    <recommendedName>
        <fullName evidence="1">Methylthioribulose-1-phosphate dehydratase</fullName>
        <shortName evidence="1">MTRu-1-P dehydratase</shortName>
        <ecNumber evidence="1">4.2.1.109</ecNumber>
    </recommendedName>
</protein>
<sequence>MTENQQLTALVAACHWIGEKGWCPATGGNMSVRLDDAQCLITESGKDKGSLQTEDFLLVDIATNHVPSGRTPSAETGLHTLLYRREPTIGAVLHTHSVNATVLSRVEKGAELVLHGYEMQKSLAGQTTHLDRVVIPIFDNDQDIPALAQRVTEFASHTPLRYGFLVRGHGLYCWGATVKEARRHLEGLEFLFQCELQRRLLEAKA</sequence>
<feature type="chain" id="PRO_0000357077" description="Methylthioribulose-1-phosphate dehydratase">
    <location>
        <begin position="1"/>
        <end position="205"/>
    </location>
</feature>
<feature type="binding site" evidence="1">
    <location>
        <position position="94"/>
    </location>
    <ligand>
        <name>Zn(2+)</name>
        <dbReference type="ChEBI" id="CHEBI:29105"/>
    </ligand>
</feature>
<feature type="binding site" evidence="1">
    <location>
        <position position="96"/>
    </location>
    <ligand>
        <name>Zn(2+)</name>
        <dbReference type="ChEBI" id="CHEBI:29105"/>
    </ligand>
</feature>
<proteinExistence type="inferred from homology"/>
<accession>Q6D1G1</accession>
<gene>
    <name evidence="1" type="primary">mtnB</name>
    <name type="ordered locus">ECA3487</name>
</gene>
<organism>
    <name type="scientific">Pectobacterium atrosepticum (strain SCRI 1043 / ATCC BAA-672)</name>
    <name type="common">Erwinia carotovora subsp. atroseptica</name>
    <dbReference type="NCBI Taxonomy" id="218491"/>
    <lineage>
        <taxon>Bacteria</taxon>
        <taxon>Pseudomonadati</taxon>
        <taxon>Pseudomonadota</taxon>
        <taxon>Gammaproteobacteria</taxon>
        <taxon>Enterobacterales</taxon>
        <taxon>Pectobacteriaceae</taxon>
        <taxon>Pectobacterium</taxon>
    </lineage>
</organism>
<keyword id="KW-0028">Amino-acid biosynthesis</keyword>
<keyword id="KW-0456">Lyase</keyword>
<keyword id="KW-0479">Metal-binding</keyword>
<keyword id="KW-0486">Methionine biosynthesis</keyword>
<keyword id="KW-1185">Reference proteome</keyword>
<keyword id="KW-0862">Zinc</keyword>
<evidence type="ECO:0000255" key="1">
    <source>
        <dbReference type="HAMAP-Rule" id="MF_01677"/>
    </source>
</evidence>
<dbReference type="EC" id="4.2.1.109" evidence="1"/>
<dbReference type="EMBL" id="BX950851">
    <property type="protein sequence ID" value="CAG76385.1"/>
    <property type="molecule type" value="Genomic_DNA"/>
</dbReference>
<dbReference type="RefSeq" id="WP_011094992.1">
    <property type="nucleotide sequence ID" value="NC_004547.2"/>
</dbReference>
<dbReference type="SMR" id="Q6D1G1"/>
<dbReference type="STRING" id="218491.ECA3487"/>
<dbReference type="KEGG" id="eca:ECA3487"/>
<dbReference type="PATRIC" id="fig|218491.5.peg.3532"/>
<dbReference type="eggNOG" id="COG0235">
    <property type="taxonomic scope" value="Bacteria"/>
</dbReference>
<dbReference type="HOGENOM" id="CLU_006033_4_1_6"/>
<dbReference type="OrthoDB" id="9805559at2"/>
<dbReference type="UniPathway" id="UPA00904">
    <property type="reaction ID" value="UER00875"/>
</dbReference>
<dbReference type="Proteomes" id="UP000007966">
    <property type="component" value="Chromosome"/>
</dbReference>
<dbReference type="GO" id="GO:0005737">
    <property type="term" value="C:cytoplasm"/>
    <property type="evidence" value="ECO:0007669"/>
    <property type="project" value="InterPro"/>
</dbReference>
<dbReference type="GO" id="GO:0046570">
    <property type="term" value="F:methylthioribulose 1-phosphate dehydratase activity"/>
    <property type="evidence" value="ECO:0007669"/>
    <property type="project" value="UniProtKB-UniRule"/>
</dbReference>
<dbReference type="GO" id="GO:0008270">
    <property type="term" value="F:zinc ion binding"/>
    <property type="evidence" value="ECO:0007669"/>
    <property type="project" value="UniProtKB-UniRule"/>
</dbReference>
<dbReference type="GO" id="GO:0019509">
    <property type="term" value="P:L-methionine salvage from methylthioadenosine"/>
    <property type="evidence" value="ECO:0007669"/>
    <property type="project" value="UniProtKB-UniRule"/>
</dbReference>
<dbReference type="GO" id="GO:0005996">
    <property type="term" value="P:monosaccharide metabolic process"/>
    <property type="evidence" value="ECO:0007669"/>
    <property type="project" value="UniProtKB-ARBA"/>
</dbReference>
<dbReference type="Gene3D" id="3.40.225.10">
    <property type="entry name" value="Class II aldolase/adducin N-terminal domain"/>
    <property type="match status" value="1"/>
</dbReference>
<dbReference type="HAMAP" id="MF_01677">
    <property type="entry name" value="Salvage_MtnB"/>
    <property type="match status" value="1"/>
</dbReference>
<dbReference type="InterPro" id="IPR001303">
    <property type="entry name" value="Aldolase_II/adducin_N"/>
</dbReference>
<dbReference type="InterPro" id="IPR036409">
    <property type="entry name" value="Aldolase_II/adducin_N_sf"/>
</dbReference>
<dbReference type="InterPro" id="IPR017714">
    <property type="entry name" value="MethylthioRu-1-P_deHdtase_MtnB"/>
</dbReference>
<dbReference type="NCBIfam" id="NF006672">
    <property type="entry name" value="PRK09220.1"/>
    <property type="match status" value="1"/>
</dbReference>
<dbReference type="NCBIfam" id="TIGR03328">
    <property type="entry name" value="salvage_mtnB"/>
    <property type="match status" value="1"/>
</dbReference>
<dbReference type="PANTHER" id="PTHR10640">
    <property type="entry name" value="METHYLTHIORIBULOSE-1-PHOSPHATE DEHYDRATASE"/>
    <property type="match status" value="1"/>
</dbReference>
<dbReference type="PANTHER" id="PTHR10640:SF7">
    <property type="entry name" value="METHYLTHIORIBULOSE-1-PHOSPHATE DEHYDRATASE"/>
    <property type="match status" value="1"/>
</dbReference>
<dbReference type="Pfam" id="PF00596">
    <property type="entry name" value="Aldolase_II"/>
    <property type="match status" value="1"/>
</dbReference>
<dbReference type="SMART" id="SM01007">
    <property type="entry name" value="Aldolase_II"/>
    <property type="match status" value="1"/>
</dbReference>
<dbReference type="SUPFAM" id="SSF53639">
    <property type="entry name" value="AraD/HMP-PK domain-like"/>
    <property type="match status" value="1"/>
</dbReference>
<reference key="1">
    <citation type="journal article" date="2004" name="Proc. Natl. Acad. Sci. U.S.A.">
        <title>Genome sequence of the enterobacterial phytopathogen Erwinia carotovora subsp. atroseptica and characterization of virulence factors.</title>
        <authorList>
            <person name="Bell K.S."/>
            <person name="Sebaihia M."/>
            <person name="Pritchard L."/>
            <person name="Holden M.T.G."/>
            <person name="Hyman L.J."/>
            <person name="Holeva M.C."/>
            <person name="Thomson N.R."/>
            <person name="Bentley S.D."/>
            <person name="Churcher L.J.C."/>
            <person name="Mungall K."/>
            <person name="Atkin R."/>
            <person name="Bason N."/>
            <person name="Brooks K."/>
            <person name="Chillingworth T."/>
            <person name="Clark K."/>
            <person name="Doggett J."/>
            <person name="Fraser A."/>
            <person name="Hance Z."/>
            <person name="Hauser H."/>
            <person name="Jagels K."/>
            <person name="Moule S."/>
            <person name="Norbertczak H."/>
            <person name="Ormond D."/>
            <person name="Price C."/>
            <person name="Quail M.A."/>
            <person name="Sanders M."/>
            <person name="Walker D."/>
            <person name="Whitehead S."/>
            <person name="Salmond G.P.C."/>
            <person name="Birch P.R.J."/>
            <person name="Parkhill J."/>
            <person name="Toth I.K."/>
        </authorList>
    </citation>
    <scope>NUCLEOTIDE SEQUENCE [LARGE SCALE GENOMIC DNA]</scope>
    <source>
        <strain>SCRI 1043 / ATCC BAA-672</strain>
    </source>
</reference>
<comment type="function">
    <text evidence="1">Catalyzes the dehydration of methylthioribulose-1-phosphate (MTRu-1-P) into 2,3-diketo-5-methylthiopentyl-1-phosphate (DK-MTP-1-P).</text>
</comment>
<comment type="catalytic activity">
    <reaction evidence="1">
        <text>5-(methylsulfanyl)-D-ribulose 1-phosphate = 5-methylsulfanyl-2,3-dioxopentyl phosphate + H2O</text>
        <dbReference type="Rhea" id="RHEA:15549"/>
        <dbReference type="ChEBI" id="CHEBI:15377"/>
        <dbReference type="ChEBI" id="CHEBI:58548"/>
        <dbReference type="ChEBI" id="CHEBI:58828"/>
        <dbReference type="EC" id="4.2.1.109"/>
    </reaction>
</comment>
<comment type="cofactor">
    <cofactor evidence="1">
        <name>Zn(2+)</name>
        <dbReference type="ChEBI" id="CHEBI:29105"/>
    </cofactor>
    <text evidence="1">Binds 1 zinc ion per subunit.</text>
</comment>
<comment type="pathway">
    <text evidence="1">Amino-acid biosynthesis; L-methionine biosynthesis via salvage pathway; L-methionine from S-methyl-5-thio-alpha-D-ribose 1-phosphate: step 2/6.</text>
</comment>
<comment type="similarity">
    <text evidence="1">Belongs to the aldolase class II family. MtnB subfamily.</text>
</comment>